<protein>
    <recommendedName>
        <fullName>Chaperone protein SycT</fullName>
    </recommendedName>
</protein>
<comment type="function">
    <text evidence="1">Functions as a specific chaperone for YopT.</text>
</comment>
<comment type="subunit">
    <text evidence="1">Binds to YopT.</text>
</comment>
<organism>
    <name type="scientific">Yersinia enterocolitica serotype O:8 / biotype 1B (strain NCTC 13174 / 8081)</name>
    <dbReference type="NCBI Taxonomy" id="393305"/>
    <lineage>
        <taxon>Bacteria</taxon>
        <taxon>Pseudomonadati</taxon>
        <taxon>Pseudomonadota</taxon>
        <taxon>Gammaproteobacteria</taxon>
        <taxon>Enterobacterales</taxon>
        <taxon>Yersiniaceae</taxon>
        <taxon>Yersinia</taxon>
    </lineage>
</organism>
<accession>A1JU66</accession>
<accession>O85243</accession>
<accession>Q93KU9</accession>
<feature type="chain" id="PRO_0000285833" description="Chaperone protein SycT">
    <location>
        <begin position="1"/>
        <end position="130"/>
    </location>
</feature>
<keyword id="KW-0143">Chaperone</keyword>
<keyword id="KW-0614">Plasmid</keyword>
<dbReference type="EMBL" id="AF336309">
    <property type="protein sequence ID" value="AAK69207.1"/>
    <property type="molecule type" value="Genomic_DNA"/>
</dbReference>
<dbReference type="EMBL" id="AM286416">
    <property type="protein sequence ID" value="CAL10030.1"/>
    <property type="molecule type" value="Genomic_DNA"/>
</dbReference>
<dbReference type="RefSeq" id="NP_783658.1">
    <property type="nucleotide sequence ID" value="NC_004564.1"/>
</dbReference>
<dbReference type="RefSeq" id="NP_863508.1">
    <property type="nucleotide sequence ID" value="NC_005017.1"/>
</dbReference>
<dbReference type="RefSeq" id="WP_005176720.1">
    <property type="nucleotide sequence ID" value="NC_008791.1"/>
</dbReference>
<dbReference type="RefSeq" id="YP_001004062.1">
    <property type="nucleotide sequence ID" value="NC_008791.1"/>
</dbReference>
<dbReference type="SMR" id="A1JU66"/>
<dbReference type="KEGG" id="yen:YEP0006"/>
<dbReference type="PATRIC" id="fig|393305.7.peg.6"/>
<dbReference type="eggNOG" id="ENOG50342IE">
    <property type="taxonomic scope" value="Bacteria"/>
</dbReference>
<dbReference type="HOGENOM" id="CLU_159405_0_0_6"/>
<dbReference type="OrthoDB" id="5587179at2"/>
<dbReference type="PRO" id="PR:A1JU66"/>
<dbReference type="Proteomes" id="UP000000642">
    <property type="component" value="Plasmid pYVe8081"/>
</dbReference>
<dbReference type="GO" id="GO:0030254">
    <property type="term" value="P:protein secretion by the type III secretion system"/>
    <property type="evidence" value="ECO:0007669"/>
    <property type="project" value="InterPro"/>
</dbReference>
<dbReference type="CDD" id="cd17032">
    <property type="entry name" value="T3SC_IA_SycT-like"/>
    <property type="match status" value="1"/>
</dbReference>
<dbReference type="Gene3D" id="3.30.1460.10">
    <property type="match status" value="1"/>
</dbReference>
<dbReference type="InterPro" id="IPR010261">
    <property type="entry name" value="Tir_chaperone"/>
</dbReference>
<dbReference type="Pfam" id="PF05932">
    <property type="entry name" value="CesT"/>
    <property type="match status" value="1"/>
</dbReference>
<dbReference type="SUPFAM" id="SSF69635">
    <property type="entry name" value="Type III secretory system chaperone-like"/>
    <property type="match status" value="1"/>
</dbReference>
<geneLocation type="plasmid">
    <name>pYVe8081</name>
</geneLocation>
<gene>
    <name type="primary">sycT</name>
    <name type="ordered locus">YEP0006</name>
</gene>
<name>SYCT_YERE8</name>
<evidence type="ECO:0000250" key="1"/>
<reference key="1">
    <citation type="journal article" date="2001" name="Infect. Immun.">
        <title>Complete DNA sequence of Yersinia enterocolitica serotype 0:8 low-calcium-response plasmid reveals a new virulence plasmid-associated replicon.</title>
        <authorList>
            <person name="Snellings N.J."/>
            <person name="Popek M."/>
            <person name="Lindler L.E."/>
        </authorList>
    </citation>
    <scope>NUCLEOTIDE SEQUENCE [GENOMIC DNA]</scope>
</reference>
<reference key="2">
    <citation type="journal article" date="2006" name="PLoS Genet.">
        <title>The complete genome sequence and comparative genome analysis of the high pathogenicity Yersinia enterocolitica strain 8081.</title>
        <authorList>
            <person name="Thomson N.R."/>
            <person name="Howard S."/>
            <person name="Wren B.W."/>
            <person name="Holden M.T.G."/>
            <person name="Crossman L."/>
            <person name="Challis G.L."/>
            <person name="Churcher C."/>
            <person name="Mungall K."/>
            <person name="Brooks K."/>
            <person name="Chillingworth T."/>
            <person name="Feltwell T."/>
            <person name="Abdellah Z."/>
            <person name="Hauser H."/>
            <person name="Jagels K."/>
            <person name="Maddison M."/>
            <person name="Moule S."/>
            <person name="Sanders M."/>
            <person name="Whitehead S."/>
            <person name="Quail M.A."/>
            <person name="Dougan G."/>
            <person name="Parkhill J."/>
            <person name="Prentice M.B."/>
        </authorList>
    </citation>
    <scope>NUCLEOTIDE SEQUENCE [LARGE SCALE GENOMIC DNA]</scope>
    <source>
        <strain>NCTC 13174 / 8081</strain>
    </source>
</reference>
<proteinExistence type="inferred from homology"/>
<sequence length="130" mass="15158">MQTTFTELMQQLFLKLGLNHQVNENDVYTFEVDGHIQVLIACYHQQWVQLFSELGADLPTNDNLFGEHWPAHVQGRLDGKPILWSQQSLVGLDIDEMQAWLERFIDDIEQRKESQNTKFQPNSTSPILFI</sequence>